<evidence type="ECO:0000255" key="1">
    <source>
        <dbReference type="HAMAP-Rule" id="MF_00556"/>
    </source>
</evidence>
<accession>Q9PIQ3</accession>
<accession>Q0PBR3</accession>
<comment type="function">
    <text evidence="1">Oxygen-binding protein. May be involved in a storage mechanism or for delivery to oxygen-requiring enzymes. The oxygen-binding site contains two iron atoms.</text>
</comment>
<comment type="subunit">
    <text evidence="1">Monomer.</text>
</comment>
<comment type="similarity">
    <text evidence="1">Belongs to the hemerythrin family.</text>
</comment>
<proteinExistence type="inferred from homology"/>
<protein>
    <recommendedName>
        <fullName evidence="1">Bacteriohemerythrin</fullName>
    </recommendedName>
</protein>
<feature type="chain" id="PRO_0000191846" description="Bacteriohemerythrin">
    <location>
        <begin position="1"/>
        <end position="133"/>
    </location>
</feature>
<feature type="binding site" evidence="1">
    <location>
        <position position="19"/>
    </location>
    <ligand>
        <name>Fe cation</name>
        <dbReference type="ChEBI" id="CHEBI:24875"/>
        <label>1</label>
    </ligand>
</feature>
<feature type="binding site" evidence="1">
    <location>
        <position position="56"/>
    </location>
    <ligand>
        <name>Fe cation</name>
        <dbReference type="ChEBI" id="CHEBI:24875"/>
        <label>1</label>
    </ligand>
</feature>
<feature type="binding site" evidence="1">
    <location>
        <position position="60"/>
    </location>
    <ligand>
        <name>Fe cation</name>
        <dbReference type="ChEBI" id="CHEBI:24875"/>
        <label>1</label>
    </ligand>
</feature>
<feature type="binding site" evidence="1">
    <location>
        <position position="60"/>
    </location>
    <ligand>
        <name>Fe cation</name>
        <dbReference type="ChEBI" id="CHEBI:24875"/>
        <label>2</label>
    </ligand>
</feature>
<feature type="binding site" evidence="1">
    <location>
        <position position="75"/>
    </location>
    <ligand>
        <name>Fe cation</name>
        <dbReference type="ChEBI" id="CHEBI:24875"/>
        <label>2</label>
    </ligand>
</feature>
<feature type="binding site" evidence="1">
    <location>
        <position position="79"/>
    </location>
    <ligand>
        <name>Fe cation</name>
        <dbReference type="ChEBI" id="CHEBI:24875"/>
        <label>2</label>
    </ligand>
</feature>
<feature type="binding site" evidence="1">
    <location>
        <position position="115"/>
    </location>
    <ligand>
        <name>Fe cation</name>
        <dbReference type="ChEBI" id="CHEBI:24875"/>
        <label>2</label>
    </ligand>
</feature>
<feature type="binding site" evidence="1">
    <location>
        <position position="120"/>
    </location>
    <ligand>
        <name>Fe cation</name>
        <dbReference type="ChEBI" id="CHEBI:24875"/>
        <label>1</label>
    </ligand>
</feature>
<feature type="binding site" evidence="1">
    <location>
        <position position="120"/>
    </location>
    <ligand>
        <name>Fe cation</name>
        <dbReference type="ChEBI" id="CHEBI:24875"/>
        <label>2</label>
    </ligand>
</feature>
<keyword id="KW-0408">Iron</keyword>
<keyword id="KW-0479">Metal-binding</keyword>
<keyword id="KW-0561">Oxygen transport</keyword>
<keyword id="KW-1185">Reference proteome</keyword>
<keyword id="KW-0813">Transport</keyword>
<gene>
    <name type="ordered locus">Cj0241c</name>
</gene>
<name>HEMTB_CAMJE</name>
<sequence>MTYNEKIISMNNDLLDHQHKELFEISKKLSLMNQRHVGTKELKIVLRELLIMINRHFSDEEAFMREIEYPYINHHTRIHRKIILEIEEIIISEAKFVNIMTEKLNLVVQDFIFKHTAKEDSKIVKYYEEKFKK</sequence>
<dbReference type="EMBL" id="AL111168">
    <property type="protein sequence ID" value="CAL34396.1"/>
    <property type="molecule type" value="Genomic_DNA"/>
</dbReference>
<dbReference type="PIR" id="A81442">
    <property type="entry name" value="A81442"/>
</dbReference>
<dbReference type="RefSeq" id="WP_002851900.1">
    <property type="nucleotide sequence ID" value="NZ_SZUC01000006.1"/>
</dbReference>
<dbReference type="RefSeq" id="YP_002343684.1">
    <property type="nucleotide sequence ID" value="NC_002163.1"/>
</dbReference>
<dbReference type="SMR" id="Q9PIQ3"/>
<dbReference type="IntAct" id="Q9PIQ3">
    <property type="interactions" value="54"/>
</dbReference>
<dbReference type="STRING" id="192222.Cj0241c"/>
<dbReference type="PaxDb" id="192222-Cj0241c"/>
<dbReference type="DNASU" id="904568"/>
<dbReference type="EnsemblBacteria" id="CAL34396">
    <property type="protein sequence ID" value="CAL34396"/>
    <property type="gene ID" value="Cj0241c"/>
</dbReference>
<dbReference type="GeneID" id="904568"/>
<dbReference type="KEGG" id="cje:Cj0241c"/>
<dbReference type="PATRIC" id="fig|192222.6.peg.235"/>
<dbReference type="eggNOG" id="COG2703">
    <property type="taxonomic scope" value="Bacteria"/>
</dbReference>
<dbReference type="HOGENOM" id="CLU_086902_3_2_7"/>
<dbReference type="OrthoDB" id="9774644at2"/>
<dbReference type="Proteomes" id="UP000000799">
    <property type="component" value="Chromosome"/>
</dbReference>
<dbReference type="GO" id="GO:0005506">
    <property type="term" value="F:iron ion binding"/>
    <property type="evidence" value="ECO:0007669"/>
    <property type="project" value="UniProtKB-UniRule"/>
</dbReference>
<dbReference type="GO" id="GO:0005344">
    <property type="term" value="F:oxygen carrier activity"/>
    <property type="evidence" value="ECO:0007669"/>
    <property type="project" value="UniProtKB-UniRule"/>
</dbReference>
<dbReference type="CDD" id="cd12107">
    <property type="entry name" value="Hemerythrin"/>
    <property type="match status" value="1"/>
</dbReference>
<dbReference type="Gene3D" id="1.20.120.50">
    <property type="entry name" value="Hemerythrin-like"/>
    <property type="match status" value="1"/>
</dbReference>
<dbReference type="HAMAP" id="MF_00556">
    <property type="entry name" value="Hemerythrin"/>
    <property type="match status" value="1"/>
</dbReference>
<dbReference type="InterPro" id="IPR023504">
    <property type="entry name" value="Bacteriohemerythrin-like"/>
</dbReference>
<dbReference type="InterPro" id="IPR016131">
    <property type="entry name" value="Haemerythrin_Fe_BS"/>
</dbReference>
<dbReference type="InterPro" id="IPR050669">
    <property type="entry name" value="Hemerythrin"/>
</dbReference>
<dbReference type="InterPro" id="IPR012312">
    <property type="entry name" value="Hemerythrin-like"/>
</dbReference>
<dbReference type="InterPro" id="IPR035938">
    <property type="entry name" value="Hemerythrin-like_sf"/>
</dbReference>
<dbReference type="InterPro" id="IPR012827">
    <property type="entry name" value="Hemerythrin_metal-bd"/>
</dbReference>
<dbReference type="NCBIfam" id="TIGR02481">
    <property type="entry name" value="hemeryth_dom"/>
    <property type="match status" value="1"/>
</dbReference>
<dbReference type="PANTHER" id="PTHR37164">
    <property type="entry name" value="BACTERIOHEMERYTHRIN"/>
    <property type="match status" value="1"/>
</dbReference>
<dbReference type="PANTHER" id="PTHR37164:SF1">
    <property type="entry name" value="BACTERIOHEMERYTHRIN"/>
    <property type="match status" value="1"/>
</dbReference>
<dbReference type="Pfam" id="PF01814">
    <property type="entry name" value="Hemerythrin"/>
    <property type="match status" value="1"/>
</dbReference>
<dbReference type="SUPFAM" id="SSF47188">
    <property type="entry name" value="Hemerythrin-like"/>
    <property type="match status" value="1"/>
</dbReference>
<dbReference type="PROSITE" id="PS00550">
    <property type="entry name" value="HEMERYTHRINS"/>
    <property type="match status" value="1"/>
</dbReference>
<reference key="1">
    <citation type="journal article" date="2000" name="Nature">
        <title>The genome sequence of the food-borne pathogen Campylobacter jejuni reveals hypervariable sequences.</title>
        <authorList>
            <person name="Parkhill J."/>
            <person name="Wren B.W."/>
            <person name="Mungall K.L."/>
            <person name="Ketley J.M."/>
            <person name="Churcher C.M."/>
            <person name="Basham D."/>
            <person name="Chillingworth T."/>
            <person name="Davies R.M."/>
            <person name="Feltwell T."/>
            <person name="Holroyd S."/>
            <person name="Jagels K."/>
            <person name="Karlyshev A.V."/>
            <person name="Moule S."/>
            <person name="Pallen M.J."/>
            <person name="Penn C.W."/>
            <person name="Quail M.A."/>
            <person name="Rajandream M.A."/>
            <person name="Rutherford K.M."/>
            <person name="van Vliet A.H.M."/>
            <person name="Whitehead S."/>
            <person name="Barrell B.G."/>
        </authorList>
    </citation>
    <scope>NUCLEOTIDE SEQUENCE [LARGE SCALE GENOMIC DNA]</scope>
    <source>
        <strain>ATCC 700819 / NCTC 11168</strain>
    </source>
</reference>
<organism>
    <name type="scientific">Campylobacter jejuni subsp. jejuni serotype O:2 (strain ATCC 700819 / NCTC 11168)</name>
    <dbReference type="NCBI Taxonomy" id="192222"/>
    <lineage>
        <taxon>Bacteria</taxon>
        <taxon>Pseudomonadati</taxon>
        <taxon>Campylobacterota</taxon>
        <taxon>Epsilonproteobacteria</taxon>
        <taxon>Campylobacterales</taxon>
        <taxon>Campylobacteraceae</taxon>
        <taxon>Campylobacter</taxon>
    </lineage>
</organism>